<evidence type="ECO:0000255" key="1">
    <source>
        <dbReference type="PROSITE-ProRule" id="PRU00448"/>
    </source>
</evidence>
<evidence type="ECO:0000269" key="2">
    <source>
    </source>
</evidence>
<evidence type="ECO:0000305" key="3"/>
<keyword id="KW-0106">Calcium</keyword>
<keyword id="KW-0479">Metal-binding</keyword>
<keyword id="KW-1185">Reference proteome</keyword>
<keyword id="KW-0677">Repeat</keyword>
<dbReference type="EMBL" id="AB070447">
    <property type="protein sequence ID" value="BAB63905.1"/>
    <property type="molecule type" value="mRNA"/>
</dbReference>
<dbReference type="EMBL" id="AAFI02000012">
    <property type="protein sequence ID" value="EAL69942.1"/>
    <property type="molecule type" value="Genomic_DNA"/>
</dbReference>
<dbReference type="RefSeq" id="XP_644187.1">
    <property type="nucleotide sequence ID" value="XM_639095.1"/>
</dbReference>
<dbReference type="SMR" id="Q869S9"/>
<dbReference type="STRING" id="44689.Q869S9"/>
<dbReference type="PaxDb" id="44689-DDB0185183"/>
<dbReference type="EnsemblProtists" id="EAL69942">
    <property type="protein sequence ID" value="EAL69942"/>
    <property type="gene ID" value="DDB_G0274099"/>
</dbReference>
<dbReference type="GeneID" id="8619616"/>
<dbReference type="KEGG" id="ddi:DDB_G0274099"/>
<dbReference type="dictyBase" id="DDB_G0274099">
    <property type="gene designation" value="cbpE"/>
</dbReference>
<dbReference type="VEuPathDB" id="AmoebaDB:DDB_G0274099"/>
<dbReference type="HOGENOM" id="CLU_1498968_0_0_1"/>
<dbReference type="InParanoid" id="Q869S9"/>
<dbReference type="PhylomeDB" id="Q869S9"/>
<dbReference type="PRO" id="PR:Q869S9"/>
<dbReference type="Proteomes" id="UP000002195">
    <property type="component" value="Chromosome 2"/>
</dbReference>
<dbReference type="GO" id="GO:0005509">
    <property type="term" value="F:calcium ion binding"/>
    <property type="evidence" value="ECO:0000314"/>
    <property type="project" value="dictyBase"/>
</dbReference>
<dbReference type="GO" id="GO:0031152">
    <property type="term" value="P:aggregation involved in sorocarp development"/>
    <property type="evidence" value="ECO:0000314"/>
    <property type="project" value="dictyBase"/>
</dbReference>
<dbReference type="FunFam" id="1.10.238.10:FF:000692">
    <property type="entry name" value="Calcium-binding protein E"/>
    <property type="match status" value="1"/>
</dbReference>
<dbReference type="Gene3D" id="1.10.238.10">
    <property type="entry name" value="EF-hand"/>
    <property type="match status" value="2"/>
</dbReference>
<dbReference type="InterPro" id="IPR011992">
    <property type="entry name" value="EF-hand-dom_pair"/>
</dbReference>
<dbReference type="InterPro" id="IPR018247">
    <property type="entry name" value="EF_Hand_1_Ca_BS"/>
</dbReference>
<dbReference type="InterPro" id="IPR002048">
    <property type="entry name" value="EF_hand_dom"/>
</dbReference>
<dbReference type="Pfam" id="PF13202">
    <property type="entry name" value="EF-hand_5"/>
    <property type="match status" value="2"/>
</dbReference>
<dbReference type="SMART" id="SM00054">
    <property type="entry name" value="EFh"/>
    <property type="match status" value="3"/>
</dbReference>
<dbReference type="SUPFAM" id="SSF47473">
    <property type="entry name" value="EF-hand"/>
    <property type="match status" value="1"/>
</dbReference>
<dbReference type="PROSITE" id="PS00018">
    <property type="entry name" value="EF_HAND_1"/>
    <property type="match status" value="3"/>
</dbReference>
<dbReference type="PROSITE" id="PS50222">
    <property type="entry name" value="EF_HAND_2"/>
    <property type="match status" value="4"/>
</dbReference>
<protein>
    <recommendedName>
        <fullName>Calcium-binding protein E</fullName>
    </recommendedName>
    <alternativeName>
        <fullName>Calcium-binding protein 5</fullName>
    </alternativeName>
</protein>
<feature type="chain" id="PRO_0000323769" description="Calcium-binding protein E">
    <location>
        <begin position="1"/>
        <end position="180"/>
    </location>
</feature>
<feature type="domain" description="EF-hand 1" evidence="1">
    <location>
        <begin position="3"/>
        <end position="38"/>
    </location>
</feature>
<feature type="domain" description="EF-hand 2" evidence="1">
    <location>
        <begin position="40"/>
        <end position="76"/>
    </location>
</feature>
<feature type="domain" description="EF-hand 3" evidence="1">
    <location>
        <begin position="85"/>
        <end position="120"/>
    </location>
</feature>
<feature type="domain" description="EF-hand 4" evidence="1">
    <location>
        <begin position="139"/>
        <end position="174"/>
    </location>
</feature>
<feature type="binding site" evidence="1">
    <location>
        <position position="16"/>
    </location>
    <ligand>
        <name>Ca(2+)</name>
        <dbReference type="ChEBI" id="CHEBI:29108"/>
        <label>1</label>
    </ligand>
</feature>
<feature type="binding site" evidence="1">
    <location>
        <position position="18"/>
    </location>
    <ligand>
        <name>Ca(2+)</name>
        <dbReference type="ChEBI" id="CHEBI:29108"/>
        <label>1</label>
    </ligand>
</feature>
<feature type="binding site" evidence="1">
    <location>
        <position position="20"/>
    </location>
    <ligand>
        <name>Ca(2+)</name>
        <dbReference type="ChEBI" id="CHEBI:29108"/>
        <label>1</label>
    </ligand>
</feature>
<feature type="binding site" evidence="1">
    <location>
        <position position="22"/>
    </location>
    <ligand>
        <name>Ca(2+)</name>
        <dbReference type="ChEBI" id="CHEBI:29108"/>
        <label>1</label>
    </ligand>
</feature>
<feature type="binding site" evidence="1">
    <location>
        <position position="27"/>
    </location>
    <ligand>
        <name>Ca(2+)</name>
        <dbReference type="ChEBI" id="CHEBI:29108"/>
        <label>1</label>
    </ligand>
</feature>
<feature type="binding site" evidence="1">
    <location>
        <position position="98"/>
    </location>
    <ligand>
        <name>Ca(2+)</name>
        <dbReference type="ChEBI" id="CHEBI:29108"/>
        <label>2</label>
    </ligand>
</feature>
<feature type="binding site" evidence="1">
    <location>
        <position position="100"/>
    </location>
    <ligand>
        <name>Ca(2+)</name>
        <dbReference type="ChEBI" id="CHEBI:29108"/>
        <label>2</label>
    </ligand>
</feature>
<feature type="binding site" evidence="1">
    <location>
        <position position="102"/>
    </location>
    <ligand>
        <name>Ca(2+)</name>
        <dbReference type="ChEBI" id="CHEBI:29108"/>
        <label>2</label>
    </ligand>
</feature>
<feature type="binding site" evidence="1">
    <location>
        <position position="109"/>
    </location>
    <ligand>
        <name>Ca(2+)</name>
        <dbReference type="ChEBI" id="CHEBI:29108"/>
        <label>2</label>
    </ligand>
</feature>
<feature type="binding site" evidence="1">
    <location>
        <position position="152"/>
    </location>
    <ligand>
        <name>Ca(2+)</name>
        <dbReference type="ChEBI" id="CHEBI:29108"/>
        <label>3</label>
    </ligand>
</feature>
<feature type="binding site" evidence="1">
    <location>
        <position position="154"/>
    </location>
    <ligand>
        <name>Ca(2+)</name>
        <dbReference type="ChEBI" id="CHEBI:29108"/>
        <label>3</label>
    </ligand>
</feature>
<feature type="binding site" evidence="1">
    <location>
        <position position="156"/>
    </location>
    <ligand>
        <name>Ca(2+)</name>
        <dbReference type="ChEBI" id="CHEBI:29108"/>
        <label>3</label>
    </ligand>
</feature>
<feature type="binding site" evidence="1">
    <location>
        <position position="158"/>
    </location>
    <ligand>
        <name>Ca(2+)</name>
        <dbReference type="ChEBI" id="CHEBI:29108"/>
        <label>3</label>
    </ligand>
</feature>
<feature type="binding site" evidence="1">
    <location>
        <position position="163"/>
    </location>
    <ligand>
        <name>Ca(2+)</name>
        <dbReference type="ChEBI" id="CHEBI:29108"/>
        <label>3</label>
    </ligand>
</feature>
<feature type="sequence conflict" description="In Ref. 1; BAB63905." evidence="3" ref="1">
    <original>S</original>
    <variation>R</variation>
    <location>
        <position position="142"/>
    </location>
</feature>
<gene>
    <name type="primary">cbpE</name>
    <name type="synonym">cbp5</name>
    <name type="ORF">DDB_G0274099</name>
</gene>
<accession>Q869S9</accession>
<accession>Q554Y6</accession>
<accession>Q966R3</accession>
<organism>
    <name type="scientific">Dictyostelium discoideum</name>
    <name type="common">Social amoeba</name>
    <dbReference type="NCBI Taxonomy" id="44689"/>
    <lineage>
        <taxon>Eukaryota</taxon>
        <taxon>Amoebozoa</taxon>
        <taxon>Evosea</taxon>
        <taxon>Eumycetozoa</taxon>
        <taxon>Dictyostelia</taxon>
        <taxon>Dictyosteliales</taxon>
        <taxon>Dictyosteliaceae</taxon>
        <taxon>Dictyostelium</taxon>
    </lineage>
</organism>
<comment type="developmental stage">
    <text evidence="2">Expression peaks at the aggregation and slug stages.</text>
</comment>
<sequence length="180" mass="21169">MSKVEAQIEKIFTSFDKDGDGNLSWDEVFSRMSSNSNIKDPLAATKSMFDHYNRDADTENLSIQEIREVLMSKKIKQDLIRTEKALRSKVKDFRKKYDTDNDGVVTFDEMYQLYLKDPDFDEEDDELSAEEREKAKCRRAKSSCRYFFSAVDKDKNDKLSYLEIHEYLKKHPEFDLGPSQ</sequence>
<proteinExistence type="evidence at protein level"/>
<name>CBPE_DICDI</name>
<reference key="1">
    <citation type="journal article" date="2003" name="Dev. Growth Differ.">
        <title>Identification and characterization of novel calcium-binding proteins of Dictyostelium and their spatial expression patterns during development.</title>
        <authorList>
            <person name="Sakamoto H."/>
            <person name="Nishio K."/>
            <person name="Tomisako M."/>
            <person name="Kuwayama H."/>
            <person name="Tanaka Y."/>
            <person name="Suetake I."/>
            <person name="Tajima S."/>
            <person name="Ogihara S."/>
            <person name="Coukell B."/>
            <person name="Maeda M."/>
        </authorList>
    </citation>
    <scope>NUCLEOTIDE SEQUENCE [MRNA]</scope>
    <scope>CALCIUM-BINDING</scope>
    <scope>DEVELOPMENTAL STAGE</scope>
    <source>
        <strain>AX4</strain>
    </source>
</reference>
<reference key="2">
    <citation type="journal article" date="2002" name="Nature">
        <title>Sequence and analysis of chromosome 2 of Dictyostelium discoideum.</title>
        <authorList>
            <person name="Gloeckner G."/>
            <person name="Eichinger L."/>
            <person name="Szafranski K."/>
            <person name="Pachebat J.A."/>
            <person name="Bankier A.T."/>
            <person name="Dear P.H."/>
            <person name="Lehmann R."/>
            <person name="Baumgart C."/>
            <person name="Parra G."/>
            <person name="Abril J.F."/>
            <person name="Guigo R."/>
            <person name="Kumpf K."/>
            <person name="Tunggal B."/>
            <person name="Cox E.C."/>
            <person name="Quail M.A."/>
            <person name="Platzer M."/>
            <person name="Rosenthal A."/>
            <person name="Noegel A.A."/>
        </authorList>
    </citation>
    <scope>NUCLEOTIDE SEQUENCE [LARGE SCALE GENOMIC DNA]</scope>
    <source>
        <strain>AX4</strain>
    </source>
</reference>
<reference key="3">
    <citation type="journal article" date="2005" name="Nature">
        <title>The genome of the social amoeba Dictyostelium discoideum.</title>
        <authorList>
            <person name="Eichinger L."/>
            <person name="Pachebat J.A."/>
            <person name="Gloeckner G."/>
            <person name="Rajandream M.A."/>
            <person name="Sucgang R."/>
            <person name="Berriman M."/>
            <person name="Song J."/>
            <person name="Olsen R."/>
            <person name="Szafranski K."/>
            <person name="Xu Q."/>
            <person name="Tunggal B."/>
            <person name="Kummerfeld S."/>
            <person name="Madera M."/>
            <person name="Konfortov B.A."/>
            <person name="Rivero F."/>
            <person name="Bankier A.T."/>
            <person name="Lehmann R."/>
            <person name="Hamlin N."/>
            <person name="Davies R."/>
            <person name="Gaudet P."/>
            <person name="Fey P."/>
            <person name="Pilcher K."/>
            <person name="Chen G."/>
            <person name="Saunders D."/>
            <person name="Sodergren E.J."/>
            <person name="Davis P."/>
            <person name="Kerhornou A."/>
            <person name="Nie X."/>
            <person name="Hall N."/>
            <person name="Anjard C."/>
            <person name="Hemphill L."/>
            <person name="Bason N."/>
            <person name="Farbrother P."/>
            <person name="Desany B."/>
            <person name="Just E."/>
            <person name="Morio T."/>
            <person name="Rost R."/>
            <person name="Churcher C.M."/>
            <person name="Cooper J."/>
            <person name="Haydock S."/>
            <person name="van Driessche N."/>
            <person name="Cronin A."/>
            <person name="Goodhead I."/>
            <person name="Muzny D.M."/>
            <person name="Mourier T."/>
            <person name="Pain A."/>
            <person name="Lu M."/>
            <person name="Harper D."/>
            <person name="Lindsay R."/>
            <person name="Hauser H."/>
            <person name="James K.D."/>
            <person name="Quiles M."/>
            <person name="Madan Babu M."/>
            <person name="Saito T."/>
            <person name="Buchrieser C."/>
            <person name="Wardroper A."/>
            <person name="Felder M."/>
            <person name="Thangavelu M."/>
            <person name="Johnson D."/>
            <person name="Knights A."/>
            <person name="Loulseged H."/>
            <person name="Mungall K.L."/>
            <person name="Oliver K."/>
            <person name="Price C."/>
            <person name="Quail M.A."/>
            <person name="Urushihara H."/>
            <person name="Hernandez J."/>
            <person name="Rabbinowitsch E."/>
            <person name="Steffen D."/>
            <person name="Sanders M."/>
            <person name="Ma J."/>
            <person name="Kohara Y."/>
            <person name="Sharp S."/>
            <person name="Simmonds M.N."/>
            <person name="Spiegler S."/>
            <person name="Tivey A."/>
            <person name="Sugano S."/>
            <person name="White B."/>
            <person name="Walker D."/>
            <person name="Woodward J.R."/>
            <person name="Winckler T."/>
            <person name="Tanaka Y."/>
            <person name="Shaulsky G."/>
            <person name="Schleicher M."/>
            <person name="Weinstock G.M."/>
            <person name="Rosenthal A."/>
            <person name="Cox E.C."/>
            <person name="Chisholm R.L."/>
            <person name="Gibbs R.A."/>
            <person name="Loomis W.F."/>
            <person name="Platzer M."/>
            <person name="Kay R.R."/>
            <person name="Williams J.G."/>
            <person name="Dear P.H."/>
            <person name="Noegel A.A."/>
            <person name="Barrell B.G."/>
            <person name="Kuspa A."/>
        </authorList>
    </citation>
    <scope>NUCLEOTIDE SEQUENCE [LARGE SCALE GENOMIC DNA]</scope>
    <source>
        <strain>AX4</strain>
    </source>
</reference>